<protein>
    <recommendedName>
        <fullName evidence="1">Undecaprenyl-diphosphatase</fullName>
        <ecNumber evidence="1">3.6.1.27</ecNumber>
    </recommendedName>
    <alternativeName>
        <fullName evidence="1">Bacitracin resistance protein</fullName>
    </alternativeName>
    <alternativeName>
        <fullName evidence="1">Undecaprenyl pyrophosphate phosphatase</fullName>
    </alternativeName>
</protein>
<dbReference type="EC" id="3.6.1.27" evidence="1"/>
<dbReference type="EMBL" id="CP000507">
    <property type="protein sequence ID" value="ABL99038.1"/>
    <property type="molecule type" value="Genomic_DNA"/>
</dbReference>
<dbReference type="RefSeq" id="WP_011758948.1">
    <property type="nucleotide sequence ID" value="NC_008700.1"/>
</dbReference>
<dbReference type="SMR" id="A1S3T2"/>
<dbReference type="STRING" id="326297.Sama_0831"/>
<dbReference type="KEGG" id="saz:Sama_0831"/>
<dbReference type="eggNOG" id="COG1968">
    <property type="taxonomic scope" value="Bacteria"/>
</dbReference>
<dbReference type="HOGENOM" id="CLU_060296_1_0_6"/>
<dbReference type="OrthoDB" id="9808289at2"/>
<dbReference type="Proteomes" id="UP000009175">
    <property type="component" value="Chromosome"/>
</dbReference>
<dbReference type="GO" id="GO:0005886">
    <property type="term" value="C:plasma membrane"/>
    <property type="evidence" value="ECO:0007669"/>
    <property type="project" value="UniProtKB-SubCell"/>
</dbReference>
<dbReference type="GO" id="GO:0050380">
    <property type="term" value="F:undecaprenyl-diphosphatase activity"/>
    <property type="evidence" value="ECO:0007669"/>
    <property type="project" value="UniProtKB-UniRule"/>
</dbReference>
<dbReference type="GO" id="GO:0071555">
    <property type="term" value="P:cell wall organization"/>
    <property type="evidence" value="ECO:0007669"/>
    <property type="project" value="UniProtKB-KW"/>
</dbReference>
<dbReference type="GO" id="GO:0009252">
    <property type="term" value="P:peptidoglycan biosynthetic process"/>
    <property type="evidence" value="ECO:0007669"/>
    <property type="project" value="UniProtKB-KW"/>
</dbReference>
<dbReference type="GO" id="GO:0008360">
    <property type="term" value="P:regulation of cell shape"/>
    <property type="evidence" value="ECO:0007669"/>
    <property type="project" value="UniProtKB-KW"/>
</dbReference>
<dbReference type="GO" id="GO:0046677">
    <property type="term" value="P:response to antibiotic"/>
    <property type="evidence" value="ECO:0007669"/>
    <property type="project" value="UniProtKB-UniRule"/>
</dbReference>
<dbReference type="HAMAP" id="MF_01006">
    <property type="entry name" value="Undec_diphosphatase"/>
    <property type="match status" value="1"/>
</dbReference>
<dbReference type="InterPro" id="IPR003824">
    <property type="entry name" value="UppP"/>
</dbReference>
<dbReference type="NCBIfam" id="NF001393">
    <property type="entry name" value="PRK00281.2-4"/>
    <property type="match status" value="1"/>
</dbReference>
<dbReference type="NCBIfam" id="TIGR00753">
    <property type="entry name" value="undec_PP_bacA"/>
    <property type="match status" value="1"/>
</dbReference>
<dbReference type="PANTHER" id="PTHR30622">
    <property type="entry name" value="UNDECAPRENYL-DIPHOSPHATASE"/>
    <property type="match status" value="1"/>
</dbReference>
<dbReference type="PANTHER" id="PTHR30622:SF4">
    <property type="entry name" value="UNDECAPRENYL-DIPHOSPHATASE"/>
    <property type="match status" value="1"/>
</dbReference>
<dbReference type="Pfam" id="PF02673">
    <property type="entry name" value="BacA"/>
    <property type="match status" value="1"/>
</dbReference>
<reference key="1">
    <citation type="submission" date="2006-12" db="EMBL/GenBank/DDBJ databases">
        <title>Complete sequence of Shewanella amazonensis SB2B.</title>
        <authorList>
            <consortium name="US DOE Joint Genome Institute"/>
            <person name="Copeland A."/>
            <person name="Lucas S."/>
            <person name="Lapidus A."/>
            <person name="Barry K."/>
            <person name="Detter J.C."/>
            <person name="Glavina del Rio T."/>
            <person name="Hammon N."/>
            <person name="Israni S."/>
            <person name="Dalin E."/>
            <person name="Tice H."/>
            <person name="Pitluck S."/>
            <person name="Munk A.C."/>
            <person name="Brettin T."/>
            <person name="Bruce D."/>
            <person name="Han C."/>
            <person name="Tapia R."/>
            <person name="Gilna P."/>
            <person name="Schmutz J."/>
            <person name="Larimer F."/>
            <person name="Land M."/>
            <person name="Hauser L."/>
            <person name="Kyrpides N."/>
            <person name="Mikhailova N."/>
            <person name="Fredrickson J."/>
            <person name="Richardson P."/>
        </authorList>
    </citation>
    <scope>NUCLEOTIDE SEQUENCE [LARGE SCALE GENOMIC DNA]</scope>
    <source>
        <strain>ATCC BAA-1098 / SB2B</strain>
    </source>
</reference>
<sequence>MDTLQVIILALIQGLTEFLPISSSAHLILPAQLFGWEDQGLSFDVAVHIGSLAAVVIYFRNEILAMLKAWLASIFRGQQSDDSKLAWWIILATIPAIGVGFTAKDMVETHLRGPGVIAITTVIFGLLLWFADRIAKDEMTEYQTGWRKALLIGVAQALALIPGTSRSGITITAALMLGLKREAAARFSFLMSIPVILGAALLMTKDIITENHVVDWHALALGSILSFIAAYACIYFFLKIISRMGMTPFVIYRIALGVFLCGFIYL</sequence>
<organism>
    <name type="scientific">Shewanella amazonensis (strain ATCC BAA-1098 / SB2B)</name>
    <dbReference type="NCBI Taxonomy" id="326297"/>
    <lineage>
        <taxon>Bacteria</taxon>
        <taxon>Pseudomonadati</taxon>
        <taxon>Pseudomonadota</taxon>
        <taxon>Gammaproteobacteria</taxon>
        <taxon>Alteromonadales</taxon>
        <taxon>Shewanellaceae</taxon>
        <taxon>Shewanella</taxon>
    </lineage>
</organism>
<gene>
    <name evidence="1" type="primary">uppP</name>
    <name type="ordered locus">Sama_0831</name>
</gene>
<evidence type="ECO:0000255" key="1">
    <source>
        <dbReference type="HAMAP-Rule" id="MF_01006"/>
    </source>
</evidence>
<keyword id="KW-0046">Antibiotic resistance</keyword>
<keyword id="KW-0997">Cell inner membrane</keyword>
<keyword id="KW-1003">Cell membrane</keyword>
<keyword id="KW-0133">Cell shape</keyword>
<keyword id="KW-0961">Cell wall biogenesis/degradation</keyword>
<keyword id="KW-0378">Hydrolase</keyword>
<keyword id="KW-0472">Membrane</keyword>
<keyword id="KW-0573">Peptidoglycan synthesis</keyword>
<keyword id="KW-1185">Reference proteome</keyword>
<keyword id="KW-0812">Transmembrane</keyword>
<keyword id="KW-1133">Transmembrane helix</keyword>
<name>UPPP_SHEAM</name>
<comment type="function">
    <text evidence="1">Catalyzes the dephosphorylation of undecaprenyl diphosphate (UPP). Confers resistance to bacitracin.</text>
</comment>
<comment type="catalytic activity">
    <reaction evidence="1">
        <text>di-trans,octa-cis-undecaprenyl diphosphate + H2O = di-trans,octa-cis-undecaprenyl phosphate + phosphate + H(+)</text>
        <dbReference type="Rhea" id="RHEA:28094"/>
        <dbReference type="ChEBI" id="CHEBI:15377"/>
        <dbReference type="ChEBI" id="CHEBI:15378"/>
        <dbReference type="ChEBI" id="CHEBI:43474"/>
        <dbReference type="ChEBI" id="CHEBI:58405"/>
        <dbReference type="ChEBI" id="CHEBI:60392"/>
        <dbReference type="EC" id="3.6.1.27"/>
    </reaction>
</comment>
<comment type="subcellular location">
    <subcellularLocation>
        <location evidence="1">Cell inner membrane</location>
        <topology evidence="1">Multi-pass membrane protein</topology>
    </subcellularLocation>
</comment>
<comment type="miscellaneous">
    <text>Bacitracin is thought to be involved in the inhibition of peptidoglycan synthesis by sequestering undecaprenyl diphosphate, thereby reducing the pool of lipid carrier available.</text>
</comment>
<comment type="similarity">
    <text evidence="1">Belongs to the UppP family.</text>
</comment>
<feature type="chain" id="PRO_0000290760" description="Undecaprenyl-diphosphatase">
    <location>
        <begin position="1"/>
        <end position="266"/>
    </location>
</feature>
<feature type="transmembrane region" description="Helical" evidence="1">
    <location>
        <begin position="1"/>
        <end position="21"/>
    </location>
</feature>
<feature type="transmembrane region" description="Helical" evidence="1">
    <location>
        <begin position="39"/>
        <end position="59"/>
    </location>
</feature>
<feature type="transmembrane region" description="Helical" evidence="1">
    <location>
        <begin position="83"/>
        <end position="103"/>
    </location>
</feature>
<feature type="transmembrane region" description="Helical" evidence="1">
    <location>
        <begin position="111"/>
        <end position="131"/>
    </location>
</feature>
<feature type="transmembrane region" description="Helical" evidence="1">
    <location>
        <begin position="149"/>
        <end position="169"/>
    </location>
</feature>
<feature type="transmembrane region" description="Helical" evidence="1">
    <location>
        <begin position="183"/>
        <end position="203"/>
    </location>
</feature>
<feature type="transmembrane region" description="Helical" evidence="1">
    <location>
        <begin position="218"/>
        <end position="238"/>
    </location>
</feature>
<feature type="transmembrane region" description="Helical" evidence="1">
    <location>
        <begin position="246"/>
        <end position="266"/>
    </location>
</feature>
<accession>A1S3T2</accession>
<proteinExistence type="inferred from homology"/>